<organism>
    <name type="scientific">Aliivibrio fischeri (strain MJ11)</name>
    <name type="common">Vibrio fischeri</name>
    <dbReference type="NCBI Taxonomy" id="388396"/>
    <lineage>
        <taxon>Bacteria</taxon>
        <taxon>Pseudomonadati</taxon>
        <taxon>Pseudomonadota</taxon>
        <taxon>Gammaproteobacteria</taxon>
        <taxon>Vibrionales</taxon>
        <taxon>Vibrionaceae</taxon>
        <taxon>Aliivibrio</taxon>
    </lineage>
</organism>
<sequence>MRIEQELKLGFKDVLFRPKRSTLKSRSQVELTRNFTFKHSGRQWSGTPVIAANMDSVGSFAMAKALSEHGVMTAVHKHYTVADWAEFIKENDASVLKNAMVSTGTSEADFQKTKDIMALTDDLIFICIDIANGYSEHLVQYVEKVRAEFPDKVISAGNVVTGDMVEELILAGADIVKVGIGPGSVCTTRVKTGVGYPQLSAIIECADAAHGLGGRIIGDGGCSCAGDVSKAFGGGADFVMLGGMLAGHEESGGEVIEQDGKQFMKFYGMSSQSAMDKHSGGVAKYRAAEGKTVLLPFRGSVHNTISDILGGVRSTCTYVGAAQLKELTKRTTFIRVQEQENNVFGKE</sequence>
<proteinExistence type="inferred from homology"/>
<comment type="function">
    <text evidence="1">Catalyzes the irreversible NADPH-dependent deamination of GMP to IMP. It functions in the conversion of nucleobase, nucleoside and nucleotide derivatives of G to A nucleotides, and in maintaining the intracellular balance of A and G nucleotides.</text>
</comment>
<comment type="catalytic activity">
    <reaction evidence="1">
        <text>IMP + NH4(+) + NADP(+) = GMP + NADPH + 2 H(+)</text>
        <dbReference type="Rhea" id="RHEA:17185"/>
        <dbReference type="ChEBI" id="CHEBI:15378"/>
        <dbReference type="ChEBI" id="CHEBI:28938"/>
        <dbReference type="ChEBI" id="CHEBI:57783"/>
        <dbReference type="ChEBI" id="CHEBI:58053"/>
        <dbReference type="ChEBI" id="CHEBI:58115"/>
        <dbReference type="ChEBI" id="CHEBI:58349"/>
        <dbReference type="EC" id="1.7.1.7"/>
    </reaction>
</comment>
<comment type="subunit">
    <text evidence="1">Homotetramer.</text>
</comment>
<comment type="similarity">
    <text evidence="1">Belongs to the IMPDH/GMPR family. GuaC type 1 subfamily.</text>
</comment>
<feature type="chain" id="PRO_1000129869" description="GMP reductase">
    <location>
        <begin position="1"/>
        <end position="347"/>
    </location>
</feature>
<feature type="active site" description="Thioimidate intermediate" evidence="1">
    <location>
        <position position="186"/>
    </location>
</feature>
<feature type="binding site" evidence="1">
    <location>
        <begin position="108"/>
        <end position="131"/>
    </location>
    <ligand>
        <name>NADP(+)</name>
        <dbReference type="ChEBI" id="CHEBI:58349"/>
    </ligand>
</feature>
<feature type="binding site" evidence="1">
    <location>
        <position position="181"/>
    </location>
    <ligand>
        <name>K(+)</name>
        <dbReference type="ChEBI" id="CHEBI:29103"/>
    </ligand>
</feature>
<feature type="binding site" evidence="1">
    <location>
        <position position="183"/>
    </location>
    <ligand>
        <name>K(+)</name>
        <dbReference type="ChEBI" id="CHEBI:29103"/>
    </ligand>
</feature>
<feature type="binding site" evidence="1">
    <location>
        <begin position="216"/>
        <end position="239"/>
    </location>
    <ligand>
        <name>NADP(+)</name>
        <dbReference type="ChEBI" id="CHEBI:58349"/>
    </ligand>
</feature>
<accession>B5EUG3</accession>
<reference key="1">
    <citation type="submission" date="2008-08" db="EMBL/GenBank/DDBJ databases">
        <title>Complete sequence of Vibrio fischeri strain MJ11.</title>
        <authorList>
            <person name="Mandel M.J."/>
            <person name="Stabb E.V."/>
            <person name="Ruby E.G."/>
            <person name="Ferriera S."/>
            <person name="Johnson J."/>
            <person name="Kravitz S."/>
            <person name="Beeson K."/>
            <person name="Sutton G."/>
            <person name="Rogers Y.-H."/>
            <person name="Friedman R."/>
            <person name="Frazier M."/>
            <person name="Venter J.C."/>
        </authorList>
    </citation>
    <scope>NUCLEOTIDE SEQUENCE [LARGE SCALE GENOMIC DNA]</scope>
    <source>
        <strain>MJ11</strain>
    </source>
</reference>
<protein>
    <recommendedName>
        <fullName evidence="1">GMP reductase</fullName>
        <ecNumber evidence="1">1.7.1.7</ecNumber>
    </recommendedName>
    <alternativeName>
        <fullName evidence="1">Guanosine 5'-monophosphate oxidoreductase</fullName>
        <shortName evidence="1">Guanosine monophosphate reductase</shortName>
    </alternativeName>
</protein>
<keyword id="KW-0479">Metal-binding</keyword>
<keyword id="KW-0521">NADP</keyword>
<keyword id="KW-0560">Oxidoreductase</keyword>
<keyword id="KW-0630">Potassium</keyword>
<dbReference type="EC" id="1.7.1.7" evidence="1"/>
<dbReference type="EMBL" id="CP001133">
    <property type="protein sequence ID" value="ACH64018.1"/>
    <property type="molecule type" value="Genomic_DNA"/>
</dbReference>
<dbReference type="RefSeq" id="WP_012535163.1">
    <property type="nucleotide sequence ID" value="NC_011186.1"/>
</dbReference>
<dbReference type="SMR" id="B5EUG3"/>
<dbReference type="KEGG" id="vfm:VFMJ11_A0782"/>
<dbReference type="HOGENOM" id="CLU_022552_5_3_6"/>
<dbReference type="Proteomes" id="UP000001857">
    <property type="component" value="Chromosome II"/>
</dbReference>
<dbReference type="GO" id="GO:0005829">
    <property type="term" value="C:cytosol"/>
    <property type="evidence" value="ECO:0007669"/>
    <property type="project" value="TreeGrafter"/>
</dbReference>
<dbReference type="GO" id="GO:1902560">
    <property type="term" value="C:GMP reductase complex"/>
    <property type="evidence" value="ECO:0007669"/>
    <property type="project" value="InterPro"/>
</dbReference>
<dbReference type="GO" id="GO:0003920">
    <property type="term" value="F:GMP reductase activity"/>
    <property type="evidence" value="ECO:0007669"/>
    <property type="project" value="UniProtKB-UniRule"/>
</dbReference>
<dbReference type="GO" id="GO:0046872">
    <property type="term" value="F:metal ion binding"/>
    <property type="evidence" value="ECO:0007669"/>
    <property type="project" value="UniProtKB-KW"/>
</dbReference>
<dbReference type="GO" id="GO:0006163">
    <property type="term" value="P:purine nucleotide metabolic process"/>
    <property type="evidence" value="ECO:0007669"/>
    <property type="project" value="UniProtKB-UniRule"/>
</dbReference>
<dbReference type="CDD" id="cd00381">
    <property type="entry name" value="IMPDH"/>
    <property type="match status" value="1"/>
</dbReference>
<dbReference type="FunFam" id="3.20.20.70:FF:000012">
    <property type="entry name" value="GMP reductase"/>
    <property type="match status" value="1"/>
</dbReference>
<dbReference type="Gene3D" id="3.20.20.70">
    <property type="entry name" value="Aldolase class I"/>
    <property type="match status" value="1"/>
</dbReference>
<dbReference type="HAMAP" id="MF_00596">
    <property type="entry name" value="GMP_reduct_type1"/>
    <property type="match status" value="1"/>
</dbReference>
<dbReference type="InterPro" id="IPR013785">
    <property type="entry name" value="Aldolase_TIM"/>
</dbReference>
<dbReference type="InterPro" id="IPR050139">
    <property type="entry name" value="GMP_reductase"/>
</dbReference>
<dbReference type="InterPro" id="IPR005993">
    <property type="entry name" value="GMPR"/>
</dbReference>
<dbReference type="InterPro" id="IPR015875">
    <property type="entry name" value="IMP_DH/GMP_Rdtase_CS"/>
</dbReference>
<dbReference type="InterPro" id="IPR001093">
    <property type="entry name" value="IMP_DH_GMPRt"/>
</dbReference>
<dbReference type="NCBIfam" id="TIGR01305">
    <property type="entry name" value="GMP_reduct_1"/>
    <property type="match status" value="1"/>
</dbReference>
<dbReference type="NCBIfam" id="NF003470">
    <property type="entry name" value="PRK05096.1"/>
    <property type="match status" value="1"/>
</dbReference>
<dbReference type="PANTHER" id="PTHR43170">
    <property type="entry name" value="GMP REDUCTASE"/>
    <property type="match status" value="1"/>
</dbReference>
<dbReference type="PANTHER" id="PTHR43170:SF5">
    <property type="entry name" value="GMP REDUCTASE"/>
    <property type="match status" value="1"/>
</dbReference>
<dbReference type="Pfam" id="PF00478">
    <property type="entry name" value="IMPDH"/>
    <property type="match status" value="1"/>
</dbReference>
<dbReference type="PIRSF" id="PIRSF000235">
    <property type="entry name" value="GMP_reductase"/>
    <property type="match status" value="1"/>
</dbReference>
<dbReference type="SMART" id="SM01240">
    <property type="entry name" value="IMPDH"/>
    <property type="match status" value="1"/>
</dbReference>
<dbReference type="SUPFAM" id="SSF51412">
    <property type="entry name" value="Inosine monophosphate dehydrogenase (IMPDH)"/>
    <property type="match status" value="1"/>
</dbReference>
<dbReference type="PROSITE" id="PS00487">
    <property type="entry name" value="IMP_DH_GMP_RED"/>
    <property type="match status" value="1"/>
</dbReference>
<name>GUAC_ALIFM</name>
<evidence type="ECO:0000255" key="1">
    <source>
        <dbReference type="HAMAP-Rule" id="MF_00596"/>
    </source>
</evidence>
<gene>
    <name evidence="1" type="primary">guaC</name>
    <name type="ordered locus">VFMJ11_A0782</name>
</gene>